<protein>
    <recommendedName>
        <fullName>Molybdopterin molybdenumtransferase</fullName>
        <shortName>MPT Mo-transferase</shortName>
        <ecNumber>2.10.1.1</ecNumber>
    </recommendedName>
</protein>
<accession>Q8CNE1</accession>
<feature type="chain" id="PRO_0000171000" description="Molybdopterin molybdenumtransferase">
    <location>
        <begin position="1"/>
        <end position="419"/>
    </location>
</feature>
<proteinExistence type="inferred from homology"/>
<evidence type="ECO:0000250" key="1"/>
<evidence type="ECO:0000305" key="2"/>
<comment type="function">
    <text evidence="1">Catalyzes the insertion of molybdate into adenylated molybdopterin with the concomitant release of AMP.</text>
</comment>
<comment type="catalytic activity">
    <reaction>
        <text>adenylyl-molybdopterin + molybdate = Mo-molybdopterin + AMP + H(+)</text>
        <dbReference type="Rhea" id="RHEA:35047"/>
        <dbReference type="ChEBI" id="CHEBI:15378"/>
        <dbReference type="ChEBI" id="CHEBI:36264"/>
        <dbReference type="ChEBI" id="CHEBI:62727"/>
        <dbReference type="ChEBI" id="CHEBI:71302"/>
        <dbReference type="ChEBI" id="CHEBI:456215"/>
        <dbReference type="EC" id="2.10.1.1"/>
    </reaction>
</comment>
<comment type="cofactor">
    <cofactor evidence="1">
        <name>Mg(2+)</name>
        <dbReference type="ChEBI" id="CHEBI:18420"/>
    </cofactor>
    <text evidence="1">Binds 1 Mg(2+) ion per subunit.</text>
</comment>
<comment type="pathway">
    <text>Cofactor biosynthesis; molybdopterin biosynthesis.</text>
</comment>
<comment type="similarity">
    <text evidence="2">Belongs to the MoeA family.</text>
</comment>
<gene>
    <name type="primary">moeA</name>
    <name type="ordered locus">SE_1846</name>
</gene>
<sequence length="419" mass="45613">MSVEKRTPISVKEAIKRIMKQHVEVKNININLDESLGHILAEDIVATYDIPRFNKSPYDGFAIRSEDSQGASGENRIEFEVIDHIGAGSVSEKTIDKNQAIRIMTGAQIPSGADAVVMFEQTIESETTFTIRKSFKHLENISLQGEEIKAGDIVLHKGMRINSGVIAVLATYGYTKVRVARKPTVAVIATGSELLEVEDELEPGKIRNSNGPMIKALAKQFGIQVGMYKVQHDNLEKSIEVVKKALSEHDLVITTGGVSVGDFDYLPEIYKSIQAQILFNKVAQRPGSVTTVAFADGKYLFGLSGNPSACYTGFELYVKPAVNKLMGAKACYPQIIKATLMEDFNKANPFTRLIRAKATLTKAGMTVIPSGFNKSGAVVAIAHANAMIMLPGGTRGFKAGNIVDVILTESNSFEEELIL</sequence>
<organism>
    <name type="scientific">Staphylococcus epidermidis (strain ATCC 12228 / FDA PCI 1200)</name>
    <dbReference type="NCBI Taxonomy" id="176280"/>
    <lineage>
        <taxon>Bacteria</taxon>
        <taxon>Bacillati</taxon>
        <taxon>Bacillota</taxon>
        <taxon>Bacilli</taxon>
        <taxon>Bacillales</taxon>
        <taxon>Staphylococcaceae</taxon>
        <taxon>Staphylococcus</taxon>
    </lineage>
</organism>
<name>MOEA_STAES</name>
<keyword id="KW-0460">Magnesium</keyword>
<keyword id="KW-0479">Metal-binding</keyword>
<keyword id="KW-0500">Molybdenum</keyword>
<keyword id="KW-0501">Molybdenum cofactor biosynthesis</keyword>
<keyword id="KW-0808">Transferase</keyword>
<dbReference type="EC" id="2.10.1.1"/>
<dbReference type="EMBL" id="AE015929">
    <property type="protein sequence ID" value="AAO05487.1"/>
    <property type="molecule type" value="Genomic_DNA"/>
</dbReference>
<dbReference type="RefSeq" id="NP_765401.1">
    <property type="nucleotide sequence ID" value="NC_004461.1"/>
</dbReference>
<dbReference type="SMR" id="Q8CNE1"/>
<dbReference type="KEGG" id="sep:SE_1846"/>
<dbReference type="PATRIC" id="fig|176280.10.peg.1804"/>
<dbReference type="eggNOG" id="COG0303">
    <property type="taxonomic scope" value="Bacteria"/>
</dbReference>
<dbReference type="HOGENOM" id="CLU_010186_7_1_9"/>
<dbReference type="OrthoDB" id="9804758at2"/>
<dbReference type="UniPathway" id="UPA00344"/>
<dbReference type="Proteomes" id="UP000001411">
    <property type="component" value="Chromosome"/>
</dbReference>
<dbReference type="GO" id="GO:0005829">
    <property type="term" value="C:cytosol"/>
    <property type="evidence" value="ECO:0007669"/>
    <property type="project" value="TreeGrafter"/>
</dbReference>
<dbReference type="GO" id="GO:0046872">
    <property type="term" value="F:metal ion binding"/>
    <property type="evidence" value="ECO:0007669"/>
    <property type="project" value="UniProtKB-KW"/>
</dbReference>
<dbReference type="GO" id="GO:0061599">
    <property type="term" value="F:molybdopterin molybdotransferase activity"/>
    <property type="evidence" value="ECO:0007669"/>
    <property type="project" value="UniProtKB-EC"/>
</dbReference>
<dbReference type="GO" id="GO:0006777">
    <property type="term" value="P:Mo-molybdopterin cofactor biosynthetic process"/>
    <property type="evidence" value="ECO:0007669"/>
    <property type="project" value="UniProtKB-KW"/>
</dbReference>
<dbReference type="CDD" id="cd00887">
    <property type="entry name" value="MoeA"/>
    <property type="match status" value="1"/>
</dbReference>
<dbReference type="FunFam" id="2.170.190.11:FF:000001">
    <property type="entry name" value="Molybdopterin molybdenumtransferase"/>
    <property type="match status" value="1"/>
</dbReference>
<dbReference type="FunFam" id="2.40.340.10:FF:000002">
    <property type="entry name" value="Molybdopterin molybdenumtransferase"/>
    <property type="match status" value="1"/>
</dbReference>
<dbReference type="FunFam" id="3.40.980.10:FF:000004">
    <property type="entry name" value="Molybdopterin molybdenumtransferase"/>
    <property type="match status" value="1"/>
</dbReference>
<dbReference type="Gene3D" id="3.40.980.10">
    <property type="entry name" value="MoaB/Mog-like domain"/>
    <property type="match status" value="1"/>
</dbReference>
<dbReference type="Gene3D" id="2.40.340.10">
    <property type="entry name" value="MoeA, C-terminal, domain IV"/>
    <property type="match status" value="1"/>
</dbReference>
<dbReference type="Gene3D" id="3.90.105.10">
    <property type="entry name" value="Molybdopterin biosynthesis moea protein, domain 2"/>
    <property type="match status" value="1"/>
</dbReference>
<dbReference type="Gene3D" id="2.170.190.11">
    <property type="entry name" value="Molybdopterin biosynthesis moea protein, domain 3"/>
    <property type="match status" value="1"/>
</dbReference>
<dbReference type="InterPro" id="IPR036425">
    <property type="entry name" value="MoaB/Mog-like_dom_sf"/>
</dbReference>
<dbReference type="InterPro" id="IPR001453">
    <property type="entry name" value="MoaB/Mog_dom"/>
</dbReference>
<dbReference type="InterPro" id="IPR038987">
    <property type="entry name" value="MoeA-like"/>
</dbReference>
<dbReference type="InterPro" id="IPR005111">
    <property type="entry name" value="MoeA_C_domain_IV"/>
</dbReference>
<dbReference type="InterPro" id="IPR036688">
    <property type="entry name" value="MoeA_C_domain_IV_sf"/>
</dbReference>
<dbReference type="InterPro" id="IPR005110">
    <property type="entry name" value="MoeA_linker/N"/>
</dbReference>
<dbReference type="InterPro" id="IPR036135">
    <property type="entry name" value="MoeA_linker/N_sf"/>
</dbReference>
<dbReference type="NCBIfam" id="NF045515">
    <property type="entry name" value="Glp_gephyrin"/>
    <property type="match status" value="1"/>
</dbReference>
<dbReference type="NCBIfam" id="TIGR00177">
    <property type="entry name" value="molyb_syn"/>
    <property type="match status" value="1"/>
</dbReference>
<dbReference type="PANTHER" id="PTHR10192:SF5">
    <property type="entry name" value="GEPHYRIN"/>
    <property type="match status" value="1"/>
</dbReference>
<dbReference type="PANTHER" id="PTHR10192">
    <property type="entry name" value="MOLYBDOPTERIN BIOSYNTHESIS PROTEIN"/>
    <property type="match status" value="1"/>
</dbReference>
<dbReference type="Pfam" id="PF00994">
    <property type="entry name" value="MoCF_biosynth"/>
    <property type="match status" value="1"/>
</dbReference>
<dbReference type="Pfam" id="PF03454">
    <property type="entry name" value="MoeA_C"/>
    <property type="match status" value="1"/>
</dbReference>
<dbReference type="Pfam" id="PF03453">
    <property type="entry name" value="MoeA_N"/>
    <property type="match status" value="1"/>
</dbReference>
<dbReference type="SMART" id="SM00852">
    <property type="entry name" value="MoCF_biosynth"/>
    <property type="match status" value="1"/>
</dbReference>
<dbReference type="SUPFAM" id="SSF63867">
    <property type="entry name" value="MoeA C-terminal domain-like"/>
    <property type="match status" value="1"/>
</dbReference>
<dbReference type="SUPFAM" id="SSF63882">
    <property type="entry name" value="MoeA N-terminal region -like"/>
    <property type="match status" value="1"/>
</dbReference>
<dbReference type="SUPFAM" id="SSF53218">
    <property type="entry name" value="Molybdenum cofactor biosynthesis proteins"/>
    <property type="match status" value="1"/>
</dbReference>
<reference key="1">
    <citation type="journal article" date="2003" name="Mol. Microbiol.">
        <title>Genome-based analysis of virulence genes in a non-biofilm-forming Staphylococcus epidermidis strain (ATCC 12228).</title>
        <authorList>
            <person name="Zhang Y.-Q."/>
            <person name="Ren S.-X."/>
            <person name="Li H.-L."/>
            <person name="Wang Y.-X."/>
            <person name="Fu G."/>
            <person name="Yang J."/>
            <person name="Qin Z.-Q."/>
            <person name="Miao Y.-G."/>
            <person name="Wang W.-Y."/>
            <person name="Chen R.-S."/>
            <person name="Shen Y."/>
            <person name="Chen Z."/>
            <person name="Yuan Z.-H."/>
            <person name="Zhao G.-P."/>
            <person name="Qu D."/>
            <person name="Danchin A."/>
            <person name="Wen Y.-M."/>
        </authorList>
    </citation>
    <scope>NUCLEOTIDE SEQUENCE [LARGE SCALE GENOMIC DNA]</scope>
    <source>
        <strain>ATCC 12228 / FDA PCI 1200</strain>
    </source>
</reference>